<gene>
    <name evidence="1" type="primary">ispH</name>
    <name type="ordered locus">YPK_3585</name>
</gene>
<keyword id="KW-0004">4Fe-4S</keyword>
<keyword id="KW-0408">Iron</keyword>
<keyword id="KW-0411">Iron-sulfur</keyword>
<keyword id="KW-0414">Isoprene biosynthesis</keyword>
<keyword id="KW-0479">Metal-binding</keyword>
<keyword id="KW-0560">Oxidoreductase</keyword>
<organism>
    <name type="scientific">Yersinia pseudotuberculosis serotype O:3 (strain YPIII)</name>
    <dbReference type="NCBI Taxonomy" id="502800"/>
    <lineage>
        <taxon>Bacteria</taxon>
        <taxon>Pseudomonadati</taxon>
        <taxon>Pseudomonadota</taxon>
        <taxon>Gammaproteobacteria</taxon>
        <taxon>Enterobacterales</taxon>
        <taxon>Yersiniaceae</taxon>
        <taxon>Yersinia</taxon>
    </lineage>
</organism>
<feature type="chain" id="PRO_1000098995" description="4-hydroxy-3-methylbut-2-enyl diphosphate reductase">
    <location>
        <begin position="1"/>
        <end position="317"/>
    </location>
</feature>
<feature type="active site" description="Proton donor" evidence="1">
    <location>
        <position position="127"/>
    </location>
</feature>
<feature type="binding site" evidence="1">
    <location>
        <position position="12"/>
    </location>
    <ligand>
        <name>[4Fe-4S] cluster</name>
        <dbReference type="ChEBI" id="CHEBI:49883"/>
    </ligand>
</feature>
<feature type="binding site" evidence="1">
    <location>
        <position position="41"/>
    </location>
    <ligand>
        <name>(2E)-4-hydroxy-3-methylbut-2-enyl diphosphate</name>
        <dbReference type="ChEBI" id="CHEBI:128753"/>
    </ligand>
</feature>
<feature type="binding site" evidence="1">
    <location>
        <position position="41"/>
    </location>
    <ligand>
        <name>dimethylallyl diphosphate</name>
        <dbReference type="ChEBI" id="CHEBI:57623"/>
    </ligand>
</feature>
<feature type="binding site" evidence="1">
    <location>
        <position position="41"/>
    </location>
    <ligand>
        <name>isopentenyl diphosphate</name>
        <dbReference type="ChEBI" id="CHEBI:128769"/>
    </ligand>
</feature>
<feature type="binding site" evidence="1">
    <location>
        <position position="74"/>
    </location>
    <ligand>
        <name>(2E)-4-hydroxy-3-methylbut-2-enyl diphosphate</name>
        <dbReference type="ChEBI" id="CHEBI:128753"/>
    </ligand>
</feature>
<feature type="binding site" evidence="1">
    <location>
        <position position="74"/>
    </location>
    <ligand>
        <name>dimethylallyl diphosphate</name>
        <dbReference type="ChEBI" id="CHEBI:57623"/>
    </ligand>
</feature>
<feature type="binding site" evidence="1">
    <location>
        <position position="74"/>
    </location>
    <ligand>
        <name>isopentenyl diphosphate</name>
        <dbReference type="ChEBI" id="CHEBI:128769"/>
    </ligand>
</feature>
<feature type="binding site" evidence="1">
    <location>
        <position position="97"/>
    </location>
    <ligand>
        <name>[4Fe-4S] cluster</name>
        <dbReference type="ChEBI" id="CHEBI:49883"/>
    </ligand>
</feature>
<feature type="binding site" evidence="1">
    <location>
        <position position="125"/>
    </location>
    <ligand>
        <name>(2E)-4-hydroxy-3-methylbut-2-enyl diphosphate</name>
        <dbReference type="ChEBI" id="CHEBI:128753"/>
    </ligand>
</feature>
<feature type="binding site" evidence="1">
    <location>
        <position position="125"/>
    </location>
    <ligand>
        <name>dimethylallyl diphosphate</name>
        <dbReference type="ChEBI" id="CHEBI:57623"/>
    </ligand>
</feature>
<feature type="binding site" evidence="1">
    <location>
        <position position="125"/>
    </location>
    <ligand>
        <name>isopentenyl diphosphate</name>
        <dbReference type="ChEBI" id="CHEBI:128769"/>
    </ligand>
</feature>
<feature type="binding site" evidence="1">
    <location>
        <position position="168"/>
    </location>
    <ligand>
        <name>(2E)-4-hydroxy-3-methylbut-2-enyl diphosphate</name>
        <dbReference type="ChEBI" id="CHEBI:128753"/>
    </ligand>
</feature>
<feature type="binding site" evidence="1">
    <location>
        <position position="198"/>
    </location>
    <ligand>
        <name>[4Fe-4S] cluster</name>
        <dbReference type="ChEBI" id="CHEBI:49883"/>
    </ligand>
</feature>
<feature type="binding site" evidence="1">
    <location>
        <position position="226"/>
    </location>
    <ligand>
        <name>(2E)-4-hydroxy-3-methylbut-2-enyl diphosphate</name>
        <dbReference type="ChEBI" id="CHEBI:128753"/>
    </ligand>
</feature>
<feature type="binding site" evidence="1">
    <location>
        <position position="226"/>
    </location>
    <ligand>
        <name>dimethylallyl diphosphate</name>
        <dbReference type="ChEBI" id="CHEBI:57623"/>
    </ligand>
</feature>
<feature type="binding site" evidence="1">
    <location>
        <position position="226"/>
    </location>
    <ligand>
        <name>isopentenyl diphosphate</name>
        <dbReference type="ChEBI" id="CHEBI:128769"/>
    </ligand>
</feature>
<feature type="binding site" evidence="1">
    <location>
        <position position="227"/>
    </location>
    <ligand>
        <name>(2E)-4-hydroxy-3-methylbut-2-enyl diphosphate</name>
        <dbReference type="ChEBI" id="CHEBI:128753"/>
    </ligand>
</feature>
<feature type="binding site" evidence="1">
    <location>
        <position position="227"/>
    </location>
    <ligand>
        <name>dimethylallyl diphosphate</name>
        <dbReference type="ChEBI" id="CHEBI:57623"/>
    </ligand>
</feature>
<feature type="binding site" evidence="1">
    <location>
        <position position="227"/>
    </location>
    <ligand>
        <name>isopentenyl diphosphate</name>
        <dbReference type="ChEBI" id="CHEBI:128769"/>
    </ligand>
</feature>
<feature type="binding site" evidence="1">
    <location>
        <position position="228"/>
    </location>
    <ligand>
        <name>(2E)-4-hydroxy-3-methylbut-2-enyl diphosphate</name>
        <dbReference type="ChEBI" id="CHEBI:128753"/>
    </ligand>
</feature>
<feature type="binding site" evidence="1">
    <location>
        <position position="228"/>
    </location>
    <ligand>
        <name>dimethylallyl diphosphate</name>
        <dbReference type="ChEBI" id="CHEBI:57623"/>
    </ligand>
</feature>
<feature type="binding site" evidence="1">
    <location>
        <position position="228"/>
    </location>
    <ligand>
        <name>isopentenyl diphosphate</name>
        <dbReference type="ChEBI" id="CHEBI:128769"/>
    </ligand>
</feature>
<feature type="binding site" evidence="1">
    <location>
        <position position="270"/>
    </location>
    <ligand>
        <name>(2E)-4-hydroxy-3-methylbut-2-enyl diphosphate</name>
        <dbReference type="ChEBI" id="CHEBI:128753"/>
    </ligand>
</feature>
<feature type="binding site" evidence="1">
    <location>
        <position position="270"/>
    </location>
    <ligand>
        <name>dimethylallyl diphosphate</name>
        <dbReference type="ChEBI" id="CHEBI:57623"/>
    </ligand>
</feature>
<feature type="binding site" evidence="1">
    <location>
        <position position="270"/>
    </location>
    <ligand>
        <name>isopentenyl diphosphate</name>
        <dbReference type="ChEBI" id="CHEBI:128769"/>
    </ligand>
</feature>
<name>ISPH_YERPY</name>
<dbReference type="EC" id="1.17.7.4" evidence="1"/>
<dbReference type="EMBL" id="CP000950">
    <property type="protein sequence ID" value="ACA69852.1"/>
    <property type="molecule type" value="Genomic_DNA"/>
</dbReference>
<dbReference type="RefSeq" id="WP_011191701.1">
    <property type="nucleotide sequence ID" value="NZ_CP009792.1"/>
</dbReference>
<dbReference type="SMR" id="B1JKZ5"/>
<dbReference type="GeneID" id="49787377"/>
<dbReference type="KEGG" id="ypy:YPK_3585"/>
<dbReference type="PATRIC" id="fig|502800.11.peg.4333"/>
<dbReference type="UniPathway" id="UPA00056">
    <property type="reaction ID" value="UER00097"/>
</dbReference>
<dbReference type="UniPathway" id="UPA00059">
    <property type="reaction ID" value="UER00105"/>
</dbReference>
<dbReference type="GO" id="GO:0051539">
    <property type="term" value="F:4 iron, 4 sulfur cluster binding"/>
    <property type="evidence" value="ECO:0007669"/>
    <property type="project" value="UniProtKB-UniRule"/>
</dbReference>
<dbReference type="GO" id="GO:0051745">
    <property type="term" value="F:4-hydroxy-3-methylbut-2-enyl diphosphate reductase activity"/>
    <property type="evidence" value="ECO:0007669"/>
    <property type="project" value="UniProtKB-UniRule"/>
</dbReference>
<dbReference type="GO" id="GO:0046872">
    <property type="term" value="F:metal ion binding"/>
    <property type="evidence" value="ECO:0007669"/>
    <property type="project" value="UniProtKB-KW"/>
</dbReference>
<dbReference type="GO" id="GO:0050992">
    <property type="term" value="P:dimethylallyl diphosphate biosynthetic process"/>
    <property type="evidence" value="ECO:0007669"/>
    <property type="project" value="UniProtKB-UniRule"/>
</dbReference>
<dbReference type="GO" id="GO:0019288">
    <property type="term" value="P:isopentenyl diphosphate biosynthetic process, methylerythritol 4-phosphate pathway"/>
    <property type="evidence" value="ECO:0007669"/>
    <property type="project" value="UniProtKB-UniRule"/>
</dbReference>
<dbReference type="GO" id="GO:0016114">
    <property type="term" value="P:terpenoid biosynthetic process"/>
    <property type="evidence" value="ECO:0007669"/>
    <property type="project" value="UniProtKB-UniRule"/>
</dbReference>
<dbReference type="CDD" id="cd13944">
    <property type="entry name" value="lytB_ispH"/>
    <property type="match status" value="1"/>
</dbReference>
<dbReference type="FunFam" id="3.40.50.11270:FF:000001">
    <property type="entry name" value="4-hydroxy-3-methylbut-2-enyl diphosphate reductase"/>
    <property type="match status" value="1"/>
</dbReference>
<dbReference type="Gene3D" id="3.40.50.11270">
    <property type="match status" value="1"/>
</dbReference>
<dbReference type="Gene3D" id="3.40.1010.20">
    <property type="entry name" value="4-hydroxy-3-methylbut-2-enyl diphosphate reductase, catalytic domain"/>
    <property type="match status" value="2"/>
</dbReference>
<dbReference type="HAMAP" id="MF_00191">
    <property type="entry name" value="IspH"/>
    <property type="match status" value="1"/>
</dbReference>
<dbReference type="InterPro" id="IPR003451">
    <property type="entry name" value="LytB/IspH"/>
</dbReference>
<dbReference type="NCBIfam" id="TIGR00216">
    <property type="entry name" value="ispH_lytB"/>
    <property type="match status" value="1"/>
</dbReference>
<dbReference type="NCBIfam" id="NF002188">
    <property type="entry name" value="PRK01045.1-2"/>
    <property type="match status" value="1"/>
</dbReference>
<dbReference type="NCBIfam" id="NF002190">
    <property type="entry name" value="PRK01045.1-4"/>
    <property type="match status" value="1"/>
</dbReference>
<dbReference type="PANTHER" id="PTHR30426">
    <property type="entry name" value="4-HYDROXY-3-METHYLBUT-2-ENYL DIPHOSPHATE REDUCTASE"/>
    <property type="match status" value="1"/>
</dbReference>
<dbReference type="PANTHER" id="PTHR30426:SF0">
    <property type="entry name" value="4-HYDROXY-3-METHYLBUT-2-ENYL DIPHOSPHATE REDUCTASE"/>
    <property type="match status" value="1"/>
</dbReference>
<dbReference type="Pfam" id="PF02401">
    <property type="entry name" value="LYTB"/>
    <property type="match status" value="1"/>
</dbReference>
<evidence type="ECO:0000255" key="1">
    <source>
        <dbReference type="HAMAP-Rule" id="MF_00191"/>
    </source>
</evidence>
<protein>
    <recommendedName>
        <fullName evidence="1">4-hydroxy-3-methylbut-2-enyl diphosphate reductase</fullName>
        <shortName evidence="1">HMBPP reductase</shortName>
        <ecNumber evidence="1">1.17.7.4</ecNumber>
    </recommendedName>
</protein>
<accession>B1JKZ5</accession>
<proteinExistence type="inferred from homology"/>
<comment type="function">
    <text evidence="1">Catalyzes the conversion of 1-hydroxy-2-methyl-2-(E)-butenyl 4-diphosphate (HMBPP) into a mixture of isopentenyl diphosphate (IPP) and dimethylallyl diphosphate (DMAPP). Acts in the terminal step of the DOXP/MEP pathway for isoprenoid precursor biosynthesis.</text>
</comment>
<comment type="catalytic activity">
    <reaction evidence="1">
        <text>isopentenyl diphosphate + 2 oxidized [2Fe-2S]-[ferredoxin] + H2O = (2E)-4-hydroxy-3-methylbut-2-enyl diphosphate + 2 reduced [2Fe-2S]-[ferredoxin] + 2 H(+)</text>
        <dbReference type="Rhea" id="RHEA:24488"/>
        <dbReference type="Rhea" id="RHEA-COMP:10000"/>
        <dbReference type="Rhea" id="RHEA-COMP:10001"/>
        <dbReference type="ChEBI" id="CHEBI:15377"/>
        <dbReference type="ChEBI" id="CHEBI:15378"/>
        <dbReference type="ChEBI" id="CHEBI:33737"/>
        <dbReference type="ChEBI" id="CHEBI:33738"/>
        <dbReference type="ChEBI" id="CHEBI:128753"/>
        <dbReference type="ChEBI" id="CHEBI:128769"/>
        <dbReference type="EC" id="1.17.7.4"/>
    </reaction>
</comment>
<comment type="catalytic activity">
    <reaction evidence="1">
        <text>dimethylallyl diphosphate + 2 oxidized [2Fe-2S]-[ferredoxin] + H2O = (2E)-4-hydroxy-3-methylbut-2-enyl diphosphate + 2 reduced [2Fe-2S]-[ferredoxin] + 2 H(+)</text>
        <dbReference type="Rhea" id="RHEA:24825"/>
        <dbReference type="Rhea" id="RHEA-COMP:10000"/>
        <dbReference type="Rhea" id="RHEA-COMP:10001"/>
        <dbReference type="ChEBI" id="CHEBI:15377"/>
        <dbReference type="ChEBI" id="CHEBI:15378"/>
        <dbReference type="ChEBI" id="CHEBI:33737"/>
        <dbReference type="ChEBI" id="CHEBI:33738"/>
        <dbReference type="ChEBI" id="CHEBI:57623"/>
        <dbReference type="ChEBI" id="CHEBI:128753"/>
        <dbReference type="EC" id="1.17.7.4"/>
    </reaction>
</comment>
<comment type="cofactor">
    <cofactor evidence="1">
        <name>[4Fe-4S] cluster</name>
        <dbReference type="ChEBI" id="CHEBI:49883"/>
    </cofactor>
    <text evidence="1">Binds 1 [4Fe-4S] cluster per subunit.</text>
</comment>
<comment type="pathway">
    <text evidence="1">Isoprenoid biosynthesis; dimethylallyl diphosphate biosynthesis; dimethylallyl diphosphate from (2E)-4-hydroxy-3-methylbutenyl diphosphate: step 1/1.</text>
</comment>
<comment type="pathway">
    <text evidence="1">Isoprenoid biosynthesis; isopentenyl diphosphate biosynthesis via DXP pathway; isopentenyl diphosphate from 1-deoxy-D-xylulose 5-phosphate: step 6/6.</text>
</comment>
<comment type="subunit">
    <text evidence="1">Homodimer.</text>
</comment>
<comment type="similarity">
    <text evidence="1">Belongs to the IspH family.</text>
</comment>
<sequence>MQILLANPRGFCAGVDRAISIVERAIEMYGAPIYVRHEVVHNRYVVESLCERGAIFIEEISEVPDGSILIFSAHGVSQAVRAEARSRNLTMLFDATCPLVTKVHMEVARASRKGKEAILIGHAGHPEVEGTMGQYSNPNGGMYLVESPDDVWQLNVKDENNLCFMTQTTLSVDDTSAVIDALNTRFPKIVGPRKDDICYATTNRQEAVRNLANDADIVLVVGSKNSSNSNRLAELVQRMGKPAYLIDSAADIQEFWLQGAQCIGVTAGASAPDILVQQVIARLKDLGAGESIELSGREENIVFEVPKELRVEVKQID</sequence>
<reference key="1">
    <citation type="submission" date="2008-02" db="EMBL/GenBank/DDBJ databases">
        <title>Complete sequence of Yersinia pseudotuberculosis YPIII.</title>
        <authorList>
            <consortium name="US DOE Joint Genome Institute"/>
            <person name="Copeland A."/>
            <person name="Lucas S."/>
            <person name="Lapidus A."/>
            <person name="Glavina del Rio T."/>
            <person name="Dalin E."/>
            <person name="Tice H."/>
            <person name="Bruce D."/>
            <person name="Goodwin L."/>
            <person name="Pitluck S."/>
            <person name="Munk A.C."/>
            <person name="Brettin T."/>
            <person name="Detter J.C."/>
            <person name="Han C."/>
            <person name="Tapia R."/>
            <person name="Schmutz J."/>
            <person name="Larimer F."/>
            <person name="Land M."/>
            <person name="Hauser L."/>
            <person name="Challacombe J.F."/>
            <person name="Green L."/>
            <person name="Lindler L.E."/>
            <person name="Nikolich M.P."/>
            <person name="Richardson P."/>
        </authorList>
    </citation>
    <scope>NUCLEOTIDE SEQUENCE [LARGE SCALE GENOMIC DNA]</scope>
    <source>
        <strain>YPIII</strain>
    </source>
</reference>